<dbReference type="EC" id="2.7.4.6" evidence="1"/>
<dbReference type="EMBL" id="CP001252">
    <property type="protein sequence ID" value="ACK46474.1"/>
    <property type="molecule type" value="Genomic_DNA"/>
</dbReference>
<dbReference type="RefSeq" id="WP_006081848.1">
    <property type="nucleotide sequence ID" value="NC_011663.1"/>
</dbReference>
<dbReference type="SMR" id="B8E9E1"/>
<dbReference type="GeneID" id="11774803"/>
<dbReference type="KEGG" id="sbp:Sbal223_1970"/>
<dbReference type="HOGENOM" id="CLU_060216_8_1_6"/>
<dbReference type="Proteomes" id="UP000002507">
    <property type="component" value="Chromosome"/>
</dbReference>
<dbReference type="GO" id="GO:0005737">
    <property type="term" value="C:cytoplasm"/>
    <property type="evidence" value="ECO:0007669"/>
    <property type="project" value="UniProtKB-SubCell"/>
</dbReference>
<dbReference type="GO" id="GO:0005524">
    <property type="term" value="F:ATP binding"/>
    <property type="evidence" value="ECO:0007669"/>
    <property type="project" value="UniProtKB-UniRule"/>
</dbReference>
<dbReference type="GO" id="GO:0046872">
    <property type="term" value="F:metal ion binding"/>
    <property type="evidence" value="ECO:0007669"/>
    <property type="project" value="UniProtKB-KW"/>
</dbReference>
<dbReference type="GO" id="GO:0004550">
    <property type="term" value="F:nucleoside diphosphate kinase activity"/>
    <property type="evidence" value="ECO:0007669"/>
    <property type="project" value="UniProtKB-UniRule"/>
</dbReference>
<dbReference type="GO" id="GO:0006241">
    <property type="term" value="P:CTP biosynthetic process"/>
    <property type="evidence" value="ECO:0007669"/>
    <property type="project" value="UniProtKB-UniRule"/>
</dbReference>
<dbReference type="GO" id="GO:0006183">
    <property type="term" value="P:GTP biosynthetic process"/>
    <property type="evidence" value="ECO:0007669"/>
    <property type="project" value="UniProtKB-UniRule"/>
</dbReference>
<dbReference type="GO" id="GO:0006228">
    <property type="term" value="P:UTP biosynthetic process"/>
    <property type="evidence" value="ECO:0007669"/>
    <property type="project" value="UniProtKB-UniRule"/>
</dbReference>
<dbReference type="CDD" id="cd04413">
    <property type="entry name" value="NDPk_I"/>
    <property type="match status" value="1"/>
</dbReference>
<dbReference type="FunFam" id="3.30.70.141:FF:000001">
    <property type="entry name" value="Nucleoside diphosphate kinase"/>
    <property type="match status" value="1"/>
</dbReference>
<dbReference type="Gene3D" id="3.30.70.141">
    <property type="entry name" value="Nucleoside diphosphate kinase-like domain"/>
    <property type="match status" value="1"/>
</dbReference>
<dbReference type="HAMAP" id="MF_00451">
    <property type="entry name" value="NDP_kinase"/>
    <property type="match status" value="1"/>
</dbReference>
<dbReference type="InterPro" id="IPR034907">
    <property type="entry name" value="NDK-like_dom"/>
</dbReference>
<dbReference type="InterPro" id="IPR036850">
    <property type="entry name" value="NDK-like_dom_sf"/>
</dbReference>
<dbReference type="InterPro" id="IPR001564">
    <property type="entry name" value="Nucleoside_diP_kinase"/>
</dbReference>
<dbReference type="InterPro" id="IPR023005">
    <property type="entry name" value="Nucleoside_diP_kinase_AS"/>
</dbReference>
<dbReference type="NCBIfam" id="NF001908">
    <property type="entry name" value="PRK00668.1"/>
    <property type="match status" value="1"/>
</dbReference>
<dbReference type="PANTHER" id="PTHR46161">
    <property type="entry name" value="NUCLEOSIDE DIPHOSPHATE KINASE"/>
    <property type="match status" value="1"/>
</dbReference>
<dbReference type="PANTHER" id="PTHR46161:SF3">
    <property type="entry name" value="NUCLEOSIDE DIPHOSPHATE KINASE DDB_G0292928-RELATED"/>
    <property type="match status" value="1"/>
</dbReference>
<dbReference type="Pfam" id="PF00334">
    <property type="entry name" value="NDK"/>
    <property type="match status" value="1"/>
</dbReference>
<dbReference type="PRINTS" id="PR01243">
    <property type="entry name" value="NUCDPKINASE"/>
</dbReference>
<dbReference type="SMART" id="SM00562">
    <property type="entry name" value="NDK"/>
    <property type="match status" value="1"/>
</dbReference>
<dbReference type="SUPFAM" id="SSF54919">
    <property type="entry name" value="Nucleoside diphosphate kinase, NDK"/>
    <property type="match status" value="1"/>
</dbReference>
<dbReference type="PROSITE" id="PS00469">
    <property type="entry name" value="NDPK"/>
    <property type="match status" value="1"/>
</dbReference>
<dbReference type="PROSITE" id="PS51374">
    <property type="entry name" value="NDPK_LIKE"/>
    <property type="match status" value="1"/>
</dbReference>
<evidence type="ECO:0000255" key="1">
    <source>
        <dbReference type="HAMAP-Rule" id="MF_00451"/>
    </source>
</evidence>
<comment type="function">
    <text evidence="1">Major role in the synthesis of nucleoside triphosphates other than ATP. The ATP gamma phosphate is transferred to the NDP beta phosphate via a ping-pong mechanism, using a phosphorylated active-site intermediate.</text>
</comment>
<comment type="catalytic activity">
    <reaction evidence="1">
        <text>a 2'-deoxyribonucleoside 5'-diphosphate + ATP = a 2'-deoxyribonucleoside 5'-triphosphate + ADP</text>
        <dbReference type="Rhea" id="RHEA:44640"/>
        <dbReference type="ChEBI" id="CHEBI:30616"/>
        <dbReference type="ChEBI" id="CHEBI:61560"/>
        <dbReference type="ChEBI" id="CHEBI:73316"/>
        <dbReference type="ChEBI" id="CHEBI:456216"/>
        <dbReference type="EC" id="2.7.4.6"/>
    </reaction>
</comment>
<comment type="catalytic activity">
    <reaction evidence="1">
        <text>a ribonucleoside 5'-diphosphate + ATP = a ribonucleoside 5'-triphosphate + ADP</text>
        <dbReference type="Rhea" id="RHEA:18113"/>
        <dbReference type="ChEBI" id="CHEBI:30616"/>
        <dbReference type="ChEBI" id="CHEBI:57930"/>
        <dbReference type="ChEBI" id="CHEBI:61557"/>
        <dbReference type="ChEBI" id="CHEBI:456216"/>
        <dbReference type="EC" id="2.7.4.6"/>
    </reaction>
</comment>
<comment type="cofactor">
    <cofactor evidence="1">
        <name>Mg(2+)</name>
        <dbReference type="ChEBI" id="CHEBI:18420"/>
    </cofactor>
</comment>
<comment type="subunit">
    <text evidence="1">Homotetramer.</text>
</comment>
<comment type="subcellular location">
    <subcellularLocation>
        <location evidence="1">Cytoplasm</location>
    </subcellularLocation>
</comment>
<comment type="similarity">
    <text evidence="1">Belongs to the NDK family.</text>
</comment>
<accession>B8E9E1</accession>
<protein>
    <recommendedName>
        <fullName evidence="1">Nucleoside diphosphate kinase</fullName>
        <shortName evidence="1">NDK</shortName>
        <shortName evidence="1">NDP kinase</shortName>
        <ecNumber evidence="1">2.7.4.6</ecNumber>
    </recommendedName>
    <alternativeName>
        <fullName evidence="1">Nucleoside-2-P kinase</fullName>
    </alternativeName>
</protein>
<feature type="chain" id="PRO_1000192290" description="Nucleoside diphosphate kinase">
    <location>
        <begin position="1"/>
        <end position="143"/>
    </location>
</feature>
<feature type="active site" description="Pros-phosphohistidine intermediate" evidence="1">
    <location>
        <position position="117"/>
    </location>
</feature>
<feature type="binding site" evidence="1">
    <location>
        <position position="11"/>
    </location>
    <ligand>
        <name>ATP</name>
        <dbReference type="ChEBI" id="CHEBI:30616"/>
    </ligand>
</feature>
<feature type="binding site" evidence="1">
    <location>
        <position position="59"/>
    </location>
    <ligand>
        <name>ATP</name>
        <dbReference type="ChEBI" id="CHEBI:30616"/>
    </ligand>
</feature>
<feature type="binding site" evidence="1">
    <location>
        <position position="87"/>
    </location>
    <ligand>
        <name>ATP</name>
        <dbReference type="ChEBI" id="CHEBI:30616"/>
    </ligand>
</feature>
<feature type="binding site" evidence="1">
    <location>
        <position position="93"/>
    </location>
    <ligand>
        <name>ATP</name>
        <dbReference type="ChEBI" id="CHEBI:30616"/>
    </ligand>
</feature>
<feature type="binding site" evidence="1">
    <location>
        <position position="104"/>
    </location>
    <ligand>
        <name>ATP</name>
        <dbReference type="ChEBI" id="CHEBI:30616"/>
    </ligand>
</feature>
<feature type="binding site" evidence="1">
    <location>
        <position position="114"/>
    </location>
    <ligand>
        <name>ATP</name>
        <dbReference type="ChEBI" id="CHEBI:30616"/>
    </ligand>
</feature>
<name>NDK_SHEB2</name>
<gene>
    <name evidence="1" type="primary">ndk</name>
    <name type="ordered locus">Sbal223_1970</name>
</gene>
<organism>
    <name type="scientific">Shewanella baltica (strain OS223)</name>
    <dbReference type="NCBI Taxonomy" id="407976"/>
    <lineage>
        <taxon>Bacteria</taxon>
        <taxon>Pseudomonadati</taxon>
        <taxon>Pseudomonadota</taxon>
        <taxon>Gammaproteobacteria</taxon>
        <taxon>Alteromonadales</taxon>
        <taxon>Shewanellaceae</taxon>
        <taxon>Shewanella</taxon>
    </lineage>
</organism>
<proteinExistence type="inferred from homology"/>
<reference key="1">
    <citation type="submission" date="2008-12" db="EMBL/GenBank/DDBJ databases">
        <title>Complete sequence of chromosome of Shewanella baltica OS223.</title>
        <authorList>
            <consortium name="US DOE Joint Genome Institute"/>
            <person name="Lucas S."/>
            <person name="Copeland A."/>
            <person name="Lapidus A."/>
            <person name="Glavina del Rio T."/>
            <person name="Dalin E."/>
            <person name="Tice H."/>
            <person name="Bruce D."/>
            <person name="Goodwin L."/>
            <person name="Pitluck S."/>
            <person name="Chertkov O."/>
            <person name="Meincke L."/>
            <person name="Brettin T."/>
            <person name="Detter J.C."/>
            <person name="Han C."/>
            <person name="Kuske C.R."/>
            <person name="Larimer F."/>
            <person name="Land M."/>
            <person name="Hauser L."/>
            <person name="Kyrpides N."/>
            <person name="Ovchinnikova G."/>
            <person name="Brettar I."/>
            <person name="Rodrigues J."/>
            <person name="Konstantinidis K."/>
            <person name="Tiedje J."/>
        </authorList>
    </citation>
    <scope>NUCLEOTIDE SEQUENCE [LARGE SCALE GENOMIC DNA]</scope>
    <source>
        <strain>OS223</strain>
    </source>
</reference>
<keyword id="KW-0067">ATP-binding</keyword>
<keyword id="KW-0963">Cytoplasm</keyword>
<keyword id="KW-0418">Kinase</keyword>
<keyword id="KW-0460">Magnesium</keyword>
<keyword id="KW-0479">Metal-binding</keyword>
<keyword id="KW-0546">Nucleotide metabolism</keyword>
<keyword id="KW-0547">Nucleotide-binding</keyword>
<keyword id="KW-0597">Phosphoprotein</keyword>
<keyword id="KW-0808">Transferase</keyword>
<sequence length="143" mass="15470">MAIERTFSIIKPDAVAKNHIGAIYNRFETAGLKIVASKMLHLTKEQAEGFYAEHSERGFFGALVAFMTSGPIMVQVLEGENAVLAHREILGATNPAQAAPGTIRADFAESIDENAAHGSDAVESAAREIAYFFSAEELCPRTR</sequence>